<organism>
    <name type="scientific">Pseudomonas fluorescens (strain SBW25)</name>
    <dbReference type="NCBI Taxonomy" id="216595"/>
    <lineage>
        <taxon>Bacteria</taxon>
        <taxon>Pseudomonadati</taxon>
        <taxon>Pseudomonadota</taxon>
        <taxon>Gammaproteobacteria</taxon>
        <taxon>Pseudomonadales</taxon>
        <taxon>Pseudomonadaceae</taxon>
        <taxon>Pseudomonas</taxon>
    </lineage>
</organism>
<proteinExistence type="inferred from homology"/>
<accession>C3K8E3</accession>
<keyword id="KW-0119">Carbohydrate metabolism</keyword>
<keyword id="KW-0963">Cytoplasm</keyword>
<keyword id="KW-0413">Isomerase</keyword>
<keyword id="KW-0460">Magnesium</keyword>
<keyword id="KW-0479">Metal-binding</keyword>
<keyword id="KW-0859">Xylose metabolism</keyword>
<comment type="catalytic activity">
    <reaction evidence="1">
        <text>alpha-D-xylose = alpha-D-xylulofuranose</text>
        <dbReference type="Rhea" id="RHEA:22816"/>
        <dbReference type="ChEBI" id="CHEBI:28518"/>
        <dbReference type="ChEBI" id="CHEBI:188998"/>
        <dbReference type="EC" id="5.3.1.5"/>
    </reaction>
</comment>
<comment type="cofactor">
    <cofactor evidence="1">
        <name>Mg(2+)</name>
        <dbReference type="ChEBI" id="CHEBI:18420"/>
    </cofactor>
    <text evidence="1">Binds 2 magnesium ions per subunit.</text>
</comment>
<comment type="subunit">
    <text evidence="1">Homotetramer.</text>
</comment>
<comment type="subcellular location">
    <subcellularLocation>
        <location evidence="1">Cytoplasm</location>
    </subcellularLocation>
</comment>
<comment type="similarity">
    <text evidence="1">Belongs to the xylose isomerase family.</text>
</comment>
<sequence>MPYFPGVEKVRFEGPSSDAPLAFRHYDANKIILGKPMREHLRMAACYWHTFVWPGADMFGVGTFKRPWQRSGDPMELAIGKADAAFEFFSKLGIDYYSFHDTDVAPEGSSLKEYRHHFAQMVDHLERHQEQTGIKLLWGTANCFSNPRFAAGAASNPDPEVFAYAAAQVFSAMNATLRLKGANYVLWGGREGYETLLNTDLKREREQLGRFMRMVVEHKHKIGFKGDLLIEPKPQEPTKHQYDYDSATVFGFLHEYGLEHEIKVNIEANHATLAGHSFHHEIATAVSLGIFGSIDANRGDPQNGWDTDQFPNSVEEMTLATYEILKAGGFKNGGYNFDSKVRRQSLDDVDLFHGHVAAMDVLALALERAAAMVQNDRLQQFKDQRYAGWQQPLGQAVLAGEFSLASLAEHAFAHELNPQAVSGRQEMLEGVVNRFIYT</sequence>
<reference key="1">
    <citation type="journal article" date="2009" name="Genome Biol.">
        <title>Genomic and genetic analyses of diversity and plant interactions of Pseudomonas fluorescens.</title>
        <authorList>
            <person name="Silby M.W."/>
            <person name="Cerdeno-Tarraga A.M."/>
            <person name="Vernikos G.S."/>
            <person name="Giddens S.R."/>
            <person name="Jackson R.W."/>
            <person name="Preston G.M."/>
            <person name="Zhang X.-X."/>
            <person name="Moon C.D."/>
            <person name="Gehrig S.M."/>
            <person name="Godfrey S.A.C."/>
            <person name="Knight C.G."/>
            <person name="Malone J.G."/>
            <person name="Robinson Z."/>
            <person name="Spiers A.J."/>
            <person name="Harris S."/>
            <person name="Challis G.L."/>
            <person name="Yaxley A.M."/>
            <person name="Harris D."/>
            <person name="Seeger K."/>
            <person name="Murphy L."/>
            <person name="Rutter S."/>
            <person name="Squares R."/>
            <person name="Quail M.A."/>
            <person name="Saunders E."/>
            <person name="Mavromatis K."/>
            <person name="Brettin T.S."/>
            <person name="Bentley S.D."/>
            <person name="Hothersall J."/>
            <person name="Stephens E."/>
            <person name="Thomas C.M."/>
            <person name="Parkhill J."/>
            <person name="Levy S.B."/>
            <person name="Rainey P.B."/>
            <person name="Thomson N.R."/>
        </authorList>
    </citation>
    <scope>NUCLEOTIDE SEQUENCE [LARGE SCALE GENOMIC DNA]</scope>
    <source>
        <strain>SBW25</strain>
    </source>
</reference>
<protein>
    <recommendedName>
        <fullName evidence="1">Xylose isomerase</fullName>
        <ecNumber evidence="1">5.3.1.5</ecNumber>
    </recommendedName>
</protein>
<gene>
    <name evidence="1" type="primary">xylA</name>
    <name type="ordered locus">PFLU_2301</name>
</gene>
<name>XYLA_PSEFS</name>
<feature type="chain" id="PRO_1000206267" description="Xylose isomerase">
    <location>
        <begin position="1"/>
        <end position="438"/>
    </location>
</feature>
<feature type="binding site" evidence="1">
    <location>
        <position position="306"/>
    </location>
    <ligand>
        <name>Mg(2+)</name>
        <dbReference type="ChEBI" id="CHEBI:18420"/>
        <label>2</label>
    </ligand>
</feature>
<feature type="binding site" evidence="1">
    <location>
        <position position="308"/>
    </location>
    <ligand>
        <name>Mg(2+)</name>
        <dbReference type="ChEBI" id="CHEBI:18420"/>
        <label>2</label>
    </ligand>
</feature>
<evidence type="ECO:0000255" key="1">
    <source>
        <dbReference type="HAMAP-Rule" id="MF_00455"/>
    </source>
</evidence>
<dbReference type="EC" id="5.3.1.5" evidence="1"/>
<dbReference type="EMBL" id="AM181176">
    <property type="protein sequence ID" value="CAY48536.1"/>
    <property type="molecule type" value="Genomic_DNA"/>
</dbReference>
<dbReference type="RefSeq" id="WP_012723530.1">
    <property type="nucleotide sequence ID" value="NC_012660.1"/>
</dbReference>
<dbReference type="SMR" id="C3K8E3"/>
<dbReference type="GeneID" id="93463805"/>
<dbReference type="eggNOG" id="COG2115">
    <property type="taxonomic scope" value="Bacteria"/>
</dbReference>
<dbReference type="HOGENOM" id="CLU_037261_1_0_6"/>
<dbReference type="OrthoDB" id="9763981at2"/>
<dbReference type="GO" id="GO:0005737">
    <property type="term" value="C:cytoplasm"/>
    <property type="evidence" value="ECO:0007669"/>
    <property type="project" value="UniProtKB-SubCell"/>
</dbReference>
<dbReference type="GO" id="GO:0000287">
    <property type="term" value="F:magnesium ion binding"/>
    <property type="evidence" value="ECO:0007669"/>
    <property type="project" value="UniProtKB-UniRule"/>
</dbReference>
<dbReference type="GO" id="GO:0009045">
    <property type="term" value="F:xylose isomerase activity"/>
    <property type="evidence" value="ECO:0007669"/>
    <property type="project" value="UniProtKB-UniRule"/>
</dbReference>
<dbReference type="GO" id="GO:0042732">
    <property type="term" value="P:D-xylose metabolic process"/>
    <property type="evidence" value="ECO:0007669"/>
    <property type="project" value="UniProtKB-UniRule"/>
</dbReference>
<dbReference type="FunFam" id="3.20.20.150:FF:000002">
    <property type="entry name" value="Xylose isomerase"/>
    <property type="match status" value="1"/>
</dbReference>
<dbReference type="Gene3D" id="3.20.20.150">
    <property type="entry name" value="Divalent-metal-dependent TIM barrel enzymes"/>
    <property type="match status" value="1"/>
</dbReference>
<dbReference type="HAMAP" id="MF_00455">
    <property type="entry name" value="Xylose_isom_A"/>
    <property type="match status" value="1"/>
</dbReference>
<dbReference type="InterPro" id="IPR036237">
    <property type="entry name" value="Xyl_isomerase-like_sf"/>
</dbReference>
<dbReference type="InterPro" id="IPR013452">
    <property type="entry name" value="Xylose_isom_bac"/>
</dbReference>
<dbReference type="InterPro" id="IPR001998">
    <property type="entry name" value="Xylose_isomerase"/>
</dbReference>
<dbReference type="NCBIfam" id="NF003998">
    <property type="entry name" value="PRK05474.1"/>
    <property type="match status" value="1"/>
</dbReference>
<dbReference type="NCBIfam" id="TIGR02630">
    <property type="entry name" value="xylose_isom_A"/>
    <property type="match status" value="1"/>
</dbReference>
<dbReference type="PANTHER" id="PTHR48408">
    <property type="match status" value="1"/>
</dbReference>
<dbReference type="PANTHER" id="PTHR48408:SF1">
    <property type="entry name" value="XYLOSE ISOMERASE"/>
    <property type="match status" value="1"/>
</dbReference>
<dbReference type="PRINTS" id="PR00688">
    <property type="entry name" value="XYLOSISMRASE"/>
</dbReference>
<dbReference type="SUPFAM" id="SSF51658">
    <property type="entry name" value="Xylose isomerase-like"/>
    <property type="match status" value="1"/>
</dbReference>
<dbReference type="PROSITE" id="PS51415">
    <property type="entry name" value="XYLOSE_ISOMERASE"/>
    <property type="match status" value="1"/>
</dbReference>